<proteinExistence type="inferred from homology"/>
<reference key="1">
    <citation type="journal article" date="2008" name="PLoS ONE">
        <title>Genome sequence of a lancefield group C Streptococcus zooepidemicus strain causing epidemic nephritis: new information about an old disease.</title>
        <authorList>
            <person name="Beres S.B."/>
            <person name="Sesso R."/>
            <person name="Pinto S.W.L."/>
            <person name="Hoe N.P."/>
            <person name="Porcella S.F."/>
            <person name="Deleo F.R."/>
            <person name="Musser J.M."/>
        </authorList>
    </citation>
    <scope>NUCLEOTIDE SEQUENCE [LARGE SCALE GENOMIC DNA]</scope>
    <source>
        <strain>MGCS10565</strain>
    </source>
</reference>
<dbReference type="EC" id="4.1.2.4" evidence="1"/>
<dbReference type="EMBL" id="CP001129">
    <property type="protein sequence ID" value="ACG62292.1"/>
    <property type="molecule type" value="Genomic_DNA"/>
</dbReference>
<dbReference type="RefSeq" id="WP_012515563.1">
    <property type="nucleotide sequence ID" value="NC_011134.1"/>
</dbReference>
<dbReference type="SMR" id="B4U2S5"/>
<dbReference type="KEGG" id="sez:Sez_0934"/>
<dbReference type="HOGENOM" id="CLU_053595_0_2_9"/>
<dbReference type="UniPathway" id="UPA00002">
    <property type="reaction ID" value="UER00468"/>
</dbReference>
<dbReference type="Proteomes" id="UP000001873">
    <property type="component" value="Chromosome"/>
</dbReference>
<dbReference type="GO" id="GO:0005737">
    <property type="term" value="C:cytoplasm"/>
    <property type="evidence" value="ECO:0007669"/>
    <property type="project" value="UniProtKB-SubCell"/>
</dbReference>
<dbReference type="GO" id="GO:0004139">
    <property type="term" value="F:deoxyribose-phosphate aldolase activity"/>
    <property type="evidence" value="ECO:0007669"/>
    <property type="project" value="UniProtKB-UniRule"/>
</dbReference>
<dbReference type="GO" id="GO:0006018">
    <property type="term" value="P:2-deoxyribose 1-phosphate catabolic process"/>
    <property type="evidence" value="ECO:0007669"/>
    <property type="project" value="UniProtKB-UniRule"/>
</dbReference>
<dbReference type="GO" id="GO:0016052">
    <property type="term" value="P:carbohydrate catabolic process"/>
    <property type="evidence" value="ECO:0007669"/>
    <property type="project" value="TreeGrafter"/>
</dbReference>
<dbReference type="GO" id="GO:0009264">
    <property type="term" value="P:deoxyribonucleotide catabolic process"/>
    <property type="evidence" value="ECO:0007669"/>
    <property type="project" value="InterPro"/>
</dbReference>
<dbReference type="CDD" id="cd00959">
    <property type="entry name" value="DeoC"/>
    <property type="match status" value="1"/>
</dbReference>
<dbReference type="FunFam" id="3.20.20.70:FF:000044">
    <property type="entry name" value="Deoxyribose-phosphate aldolase"/>
    <property type="match status" value="1"/>
</dbReference>
<dbReference type="Gene3D" id="3.20.20.70">
    <property type="entry name" value="Aldolase class I"/>
    <property type="match status" value="1"/>
</dbReference>
<dbReference type="HAMAP" id="MF_00114">
    <property type="entry name" value="DeoC_type1"/>
    <property type="match status" value="1"/>
</dbReference>
<dbReference type="InterPro" id="IPR013785">
    <property type="entry name" value="Aldolase_TIM"/>
</dbReference>
<dbReference type="InterPro" id="IPR011343">
    <property type="entry name" value="DeoC"/>
</dbReference>
<dbReference type="InterPro" id="IPR002915">
    <property type="entry name" value="DeoC/FbaB/LacD_aldolase"/>
</dbReference>
<dbReference type="InterPro" id="IPR028581">
    <property type="entry name" value="DeoC_typeI"/>
</dbReference>
<dbReference type="NCBIfam" id="TIGR00126">
    <property type="entry name" value="deoC"/>
    <property type="match status" value="1"/>
</dbReference>
<dbReference type="PANTHER" id="PTHR10889">
    <property type="entry name" value="DEOXYRIBOSE-PHOSPHATE ALDOLASE"/>
    <property type="match status" value="1"/>
</dbReference>
<dbReference type="PANTHER" id="PTHR10889:SF1">
    <property type="entry name" value="DEOXYRIBOSE-PHOSPHATE ALDOLASE"/>
    <property type="match status" value="1"/>
</dbReference>
<dbReference type="Pfam" id="PF01791">
    <property type="entry name" value="DeoC"/>
    <property type="match status" value="1"/>
</dbReference>
<dbReference type="PIRSF" id="PIRSF001357">
    <property type="entry name" value="DeoC"/>
    <property type="match status" value="1"/>
</dbReference>
<dbReference type="SMART" id="SM01133">
    <property type="entry name" value="DeoC"/>
    <property type="match status" value="1"/>
</dbReference>
<dbReference type="SUPFAM" id="SSF51569">
    <property type="entry name" value="Aldolase"/>
    <property type="match status" value="1"/>
</dbReference>
<comment type="function">
    <text evidence="1">Catalyzes a reversible aldol reaction between acetaldehyde and D-glyceraldehyde 3-phosphate to generate 2-deoxy-D-ribose 5-phosphate.</text>
</comment>
<comment type="catalytic activity">
    <reaction evidence="1">
        <text>2-deoxy-D-ribose 5-phosphate = D-glyceraldehyde 3-phosphate + acetaldehyde</text>
        <dbReference type="Rhea" id="RHEA:12821"/>
        <dbReference type="ChEBI" id="CHEBI:15343"/>
        <dbReference type="ChEBI" id="CHEBI:59776"/>
        <dbReference type="ChEBI" id="CHEBI:62877"/>
        <dbReference type="EC" id="4.1.2.4"/>
    </reaction>
</comment>
<comment type="pathway">
    <text evidence="1">Carbohydrate degradation; 2-deoxy-D-ribose 1-phosphate degradation; D-glyceraldehyde 3-phosphate and acetaldehyde from 2-deoxy-alpha-D-ribose 1-phosphate: step 2/2.</text>
</comment>
<comment type="subcellular location">
    <subcellularLocation>
        <location evidence="1">Cytoplasm</location>
    </subcellularLocation>
</comment>
<comment type="similarity">
    <text evidence="1">Belongs to the DeoC/FbaB aldolase family. DeoC type 1 subfamily.</text>
</comment>
<accession>B4U2S5</accession>
<keyword id="KW-0963">Cytoplasm</keyword>
<keyword id="KW-0456">Lyase</keyword>
<keyword id="KW-0704">Schiff base</keyword>
<sequence>MNINKYIDHTLLKADSVQSQLDQLIEEAKAYDFASVCVNPCWVAYAAKALKGTDVKVCTVVGFPLGATTSATKAFETKDAIENGADEIDMVINIGLLKQGDYQAVEDDMRAVVEASGDKLVKVIIEACLLTDDEKVKACQLAVNAGVDFVKTSTGFSTGGATVSDVKLMRQTVGPDIGVKAAGGARSLEDALAFVEAGATRIGTSAGVTIMKGEVANGGY</sequence>
<name>DEOC_STREM</name>
<feature type="chain" id="PRO_1000094855" description="Deoxyribose-phosphate aldolase">
    <location>
        <begin position="1"/>
        <end position="220"/>
    </location>
</feature>
<feature type="active site" description="Proton donor/acceptor" evidence="1">
    <location>
        <position position="89"/>
    </location>
</feature>
<feature type="active site" description="Schiff-base intermediate with acetaldehyde" evidence="1">
    <location>
        <position position="151"/>
    </location>
</feature>
<feature type="active site" description="Proton donor/acceptor" evidence="1">
    <location>
        <position position="180"/>
    </location>
</feature>
<evidence type="ECO:0000255" key="1">
    <source>
        <dbReference type="HAMAP-Rule" id="MF_00114"/>
    </source>
</evidence>
<protein>
    <recommendedName>
        <fullName evidence="1">Deoxyribose-phosphate aldolase</fullName>
        <shortName evidence="1">DERA</shortName>
        <ecNumber evidence="1">4.1.2.4</ecNumber>
    </recommendedName>
    <alternativeName>
        <fullName evidence="1">2-deoxy-D-ribose 5-phosphate aldolase</fullName>
    </alternativeName>
    <alternativeName>
        <fullName evidence="1">Phosphodeoxyriboaldolase</fullName>
        <shortName evidence="1">Deoxyriboaldolase</shortName>
    </alternativeName>
</protein>
<organism>
    <name type="scientific">Streptococcus equi subsp. zooepidemicus (strain MGCS10565)</name>
    <dbReference type="NCBI Taxonomy" id="552526"/>
    <lineage>
        <taxon>Bacteria</taxon>
        <taxon>Bacillati</taxon>
        <taxon>Bacillota</taxon>
        <taxon>Bacilli</taxon>
        <taxon>Lactobacillales</taxon>
        <taxon>Streptococcaceae</taxon>
        <taxon>Streptococcus</taxon>
    </lineage>
</organism>
<gene>
    <name evidence="1" type="primary">deoC</name>
    <name type="ordered locus">Sez_0934</name>
</gene>